<dbReference type="EMBL" id="BX571965">
    <property type="protein sequence ID" value="CAH37331.1"/>
    <property type="molecule type" value="Genomic_DNA"/>
</dbReference>
<dbReference type="EMBL" id="AF084813">
    <property type="protein sequence ID" value="AAC34681.1"/>
    <property type="molecule type" value="Genomic_DNA"/>
</dbReference>
<dbReference type="EMBL" id="AF084812">
    <property type="protein sequence ID" value="AAC34679.1"/>
    <property type="molecule type" value="Genomic_DNA"/>
</dbReference>
<dbReference type="RefSeq" id="YP_109914.1">
    <property type="nucleotide sequence ID" value="NC_006350.1"/>
</dbReference>
<dbReference type="SMR" id="P0DML1"/>
<dbReference type="STRING" id="272560.BPSL3318"/>
<dbReference type="KEGG" id="bps:BPSL3318"/>
<dbReference type="PATRIC" id="fig|272560.51.peg.1896"/>
<dbReference type="eggNOG" id="COG0828">
    <property type="taxonomic scope" value="Bacteria"/>
</dbReference>
<dbReference type="Proteomes" id="UP000000605">
    <property type="component" value="Chromosome 1"/>
</dbReference>
<dbReference type="GO" id="GO:1990904">
    <property type="term" value="C:ribonucleoprotein complex"/>
    <property type="evidence" value="ECO:0007669"/>
    <property type="project" value="UniProtKB-KW"/>
</dbReference>
<dbReference type="GO" id="GO:0005840">
    <property type="term" value="C:ribosome"/>
    <property type="evidence" value="ECO:0007669"/>
    <property type="project" value="UniProtKB-KW"/>
</dbReference>
<dbReference type="GO" id="GO:0003735">
    <property type="term" value="F:structural constituent of ribosome"/>
    <property type="evidence" value="ECO:0007669"/>
    <property type="project" value="InterPro"/>
</dbReference>
<dbReference type="GO" id="GO:0006412">
    <property type="term" value="P:translation"/>
    <property type="evidence" value="ECO:0007669"/>
    <property type="project" value="UniProtKB-UniRule"/>
</dbReference>
<dbReference type="Gene3D" id="1.20.5.1150">
    <property type="entry name" value="Ribosomal protein S8"/>
    <property type="match status" value="1"/>
</dbReference>
<dbReference type="HAMAP" id="MF_00358">
    <property type="entry name" value="Ribosomal_bS21"/>
    <property type="match status" value="1"/>
</dbReference>
<dbReference type="InterPro" id="IPR001911">
    <property type="entry name" value="Ribosomal_bS21"/>
</dbReference>
<dbReference type="InterPro" id="IPR038380">
    <property type="entry name" value="Ribosomal_bS21_sf"/>
</dbReference>
<dbReference type="NCBIfam" id="TIGR00030">
    <property type="entry name" value="S21p"/>
    <property type="match status" value="1"/>
</dbReference>
<dbReference type="PANTHER" id="PTHR21109">
    <property type="entry name" value="MITOCHONDRIAL 28S RIBOSOMAL PROTEIN S21"/>
    <property type="match status" value="1"/>
</dbReference>
<dbReference type="PANTHER" id="PTHR21109:SF22">
    <property type="entry name" value="SMALL RIBOSOMAL SUBUNIT PROTEIN BS21"/>
    <property type="match status" value="1"/>
</dbReference>
<dbReference type="Pfam" id="PF01165">
    <property type="entry name" value="Ribosomal_S21"/>
    <property type="match status" value="1"/>
</dbReference>
<dbReference type="PRINTS" id="PR00976">
    <property type="entry name" value="RIBOSOMALS21"/>
</dbReference>
<accession>P0DML1</accession>
<accession>O88123</accession>
<accession>P70943</accession>
<accession>Q63PQ5</accession>
<proteinExistence type="inferred from homology"/>
<organism>
    <name type="scientific">Burkholderia pseudomallei (strain K96243)</name>
    <dbReference type="NCBI Taxonomy" id="272560"/>
    <lineage>
        <taxon>Bacteria</taxon>
        <taxon>Pseudomonadati</taxon>
        <taxon>Pseudomonadota</taxon>
        <taxon>Betaproteobacteria</taxon>
        <taxon>Burkholderiales</taxon>
        <taxon>Burkholderiaceae</taxon>
        <taxon>Burkholderia</taxon>
        <taxon>pseudomallei group</taxon>
    </lineage>
</organism>
<feature type="chain" id="PRO_0000178318" description="Small ribosomal subunit protein bS21A">
    <location>
        <begin position="1"/>
        <end position="70"/>
    </location>
</feature>
<keyword id="KW-1185">Reference proteome</keyword>
<keyword id="KW-0687">Ribonucleoprotein</keyword>
<keyword id="KW-0689">Ribosomal protein</keyword>
<protein>
    <recommendedName>
        <fullName evidence="1">Small ribosomal subunit protein bS21A</fullName>
    </recommendedName>
    <alternativeName>
        <fullName evidence="2">30S ribosomal protein S21 1</fullName>
    </alternativeName>
</protein>
<sequence>MTTILLKENEPFEVAIRRFRRAIEKNGLIAELRERQAYEKPTAVRKRKKAAAVKRLHKRLRSQMLPKKLH</sequence>
<gene>
    <name type="primary">rpsU1</name>
    <name type="ordered locus">BPSL3318</name>
</gene>
<reference key="1">
    <citation type="journal article" date="2004" name="Proc. Natl. Acad. Sci. U.S.A.">
        <title>Genomic plasticity of the causative agent of melioidosis, Burkholderia pseudomallei.</title>
        <authorList>
            <person name="Holden M.T.G."/>
            <person name="Titball R.W."/>
            <person name="Peacock S.J."/>
            <person name="Cerdeno-Tarraga A.-M."/>
            <person name="Atkins T."/>
            <person name="Crossman L.C."/>
            <person name="Pitt T."/>
            <person name="Churcher C."/>
            <person name="Mungall K.L."/>
            <person name="Bentley S.D."/>
            <person name="Sebaihia M."/>
            <person name="Thomson N.R."/>
            <person name="Bason N."/>
            <person name="Beacham I.R."/>
            <person name="Brooks K."/>
            <person name="Brown K.A."/>
            <person name="Brown N.F."/>
            <person name="Challis G.L."/>
            <person name="Cherevach I."/>
            <person name="Chillingworth T."/>
            <person name="Cronin A."/>
            <person name="Crossett B."/>
            <person name="Davis P."/>
            <person name="DeShazer D."/>
            <person name="Feltwell T."/>
            <person name="Fraser A."/>
            <person name="Hance Z."/>
            <person name="Hauser H."/>
            <person name="Holroyd S."/>
            <person name="Jagels K."/>
            <person name="Keith K.E."/>
            <person name="Maddison M."/>
            <person name="Moule S."/>
            <person name="Price C."/>
            <person name="Quail M.A."/>
            <person name="Rabbinowitsch E."/>
            <person name="Rutherford K."/>
            <person name="Sanders M."/>
            <person name="Simmonds M."/>
            <person name="Songsivilai S."/>
            <person name="Stevens K."/>
            <person name="Tumapa S."/>
            <person name="Vesaratchavest M."/>
            <person name="Whitehead S."/>
            <person name="Yeats C."/>
            <person name="Barrell B.G."/>
            <person name="Oyston P.C.F."/>
            <person name="Parkhill J."/>
        </authorList>
    </citation>
    <scope>NUCLEOTIDE SEQUENCE [LARGE SCALE GENOMIC DNA]</scope>
    <source>
        <strain>K96243</strain>
    </source>
</reference>
<reference key="2">
    <citation type="submission" date="1998-08" db="EMBL/GenBank/DDBJ databases">
        <title>PCR-based detection and differentiation of Burkholderia mallei and pseudomallei.</title>
        <authorList>
            <person name="Zysk G."/>
            <person name="Splettstoesser W.D."/>
            <person name="Sprague L.D."/>
            <person name="Meyer H."/>
            <person name="Neubauer H."/>
        </authorList>
    </citation>
    <scope>NUCLEOTIDE SEQUENCE [GENOMIC DNA] OF 1-63</scope>
    <source>
        <strain>ATCC 15682</strain>
        <strain>ATCC 23343</strain>
    </source>
</reference>
<name>RS211_BURPS</name>
<evidence type="ECO:0000255" key="1">
    <source>
        <dbReference type="HAMAP-Rule" id="MF_00358"/>
    </source>
</evidence>
<evidence type="ECO:0000305" key="2"/>
<comment type="similarity">
    <text evidence="2">Belongs to the bacterial ribosomal protein bS21 family.</text>
</comment>